<organism>
    <name type="scientific">Drosophila melanogaster</name>
    <name type="common">Fruit fly</name>
    <dbReference type="NCBI Taxonomy" id="7227"/>
    <lineage>
        <taxon>Eukaryota</taxon>
        <taxon>Metazoa</taxon>
        <taxon>Ecdysozoa</taxon>
        <taxon>Arthropoda</taxon>
        <taxon>Hexapoda</taxon>
        <taxon>Insecta</taxon>
        <taxon>Pterygota</taxon>
        <taxon>Neoptera</taxon>
        <taxon>Endopterygota</taxon>
        <taxon>Diptera</taxon>
        <taxon>Brachycera</taxon>
        <taxon>Muscomorpha</taxon>
        <taxon>Ephydroidea</taxon>
        <taxon>Drosophilidae</taxon>
        <taxon>Drosophila</taxon>
        <taxon>Sophophora</taxon>
    </lineage>
</organism>
<protein>
    <recommendedName>
        <fullName evidence="7">Ninein homolog</fullName>
    </recommendedName>
    <alternativeName>
        <fullName evidence="8">Blastoderm-specific protein 25D</fullName>
    </alternativeName>
</protein>
<keyword id="KW-0025">Alternative splicing</keyword>
<keyword id="KW-0963">Cytoplasm</keyword>
<keyword id="KW-0206">Cytoskeleton</keyword>
<keyword id="KW-0217">Developmental protein</keyword>
<keyword id="KW-0597">Phosphoprotein</keyword>
<keyword id="KW-1185">Reference proteome</keyword>
<gene>
    <name evidence="7 12" type="primary">Nin</name>
    <name evidence="8" type="synonym">Bsg25D</name>
    <name evidence="12" type="ORF">CG14025</name>
</gene>
<reference key="1">
    <citation type="journal article" date="1987" name="Nucleic Acids Res.">
        <title>Molecular characterization of bsg25D: a blastoderm-specific locus of Drosophila melanogaster.</title>
        <authorList>
            <person name="Boyer P.D."/>
            <person name="Mahoney P.A."/>
            <person name="Lengyel J.A."/>
        </authorList>
    </citation>
    <scope>NUCLEOTIDE SEQUENCE [GENOMIC DNA] OF 1-828</scope>
</reference>
<reference key="2">
    <citation type="journal article" date="2000" name="Science">
        <title>The genome sequence of Drosophila melanogaster.</title>
        <authorList>
            <person name="Adams M.D."/>
            <person name="Celniker S.E."/>
            <person name="Holt R.A."/>
            <person name="Evans C.A."/>
            <person name="Gocayne J.D."/>
            <person name="Amanatides P.G."/>
            <person name="Scherer S.E."/>
            <person name="Li P.W."/>
            <person name="Hoskins R.A."/>
            <person name="Galle R.F."/>
            <person name="George R.A."/>
            <person name="Lewis S.E."/>
            <person name="Richards S."/>
            <person name="Ashburner M."/>
            <person name="Henderson S.N."/>
            <person name="Sutton G.G."/>
            <person name="Wortman J.R."/>
            <person name="Yandell M.D."/>
            <person name="Zhang Q."/>
            <person name="Chen L.X."/>
            <person name="Brandon R.C."/>
            <person name="Rogers Y.-H.C."/>
            <person name="Blazej R.G."/>
            <person name="Champe M."/>
            <person name="Pfeiffer B.D."/>
            <person name="Wan K.H."/>
            <person name="Doyle C."/>
            <person name="Baxter E.G."/>
            <person name="Helt G."/>
            <person name="Nelson C.R."/>
            <person name="Miklos G.L.G."/>
            <person name="Abril J.F."/>
            <person name="Agbayani A."/>
            <person name="An H.-J."/>
            <person name="Andrews-Pfannkoch C."/>
            <person name="Baldwin D."/>
            <person name="Ballew R.M."/>
            <person name="Basu A."/>
            <person name="Baxendale J."/>
            <person name="Bayraktaroglu L."/>
            <person name="Beasley E.M."/>
            <person name="Beeson K.Y."/>
            <person name="Benos P.V."/>
            <person name="Berman B.P."/>
            <person name="Bhandari D."/>
            <person name="Bolshakov S."/>
            <person name="Borkova D."/>
            <person name="Botchan M.R."/>
            <person name="Bouck J."/>
            <person name="Brokstein P."/>
            <person name="Brottier P."/>
            <person name="Burtis K.C."/>
            <person name="Busam D.A."/>
            <person name="Butler H."/>
            <person name="Cadieu E."/>
            <person name="Center A."/>
            <person name="Chandra I."/>
            <person name="Cherry J.M."/>
            <person name="Cawley S."/>
            <person name="Dahlke C."/>
            <person name="Davenport L.B."/>
            <person name="Davies P."/>
            <person name="de Pablos B."/>
            <person name="Delcher A."/>
            <person name="Deng Z."/>
            <person name="Mays A.D."/>
            <person name="Dew I."/>
            <person name="Dietz S.M."/>
            <person name="Dodson K."/>
            <person name="Doup L.E."/>
            <person name="Downes M."/>
            <person name="Dugan-Rocha S."/>
            <person name="Dunkov B.C."/>
            <person name="Dunn P."/>
            <person name="Durbin K.J."/>
            <person name="Evangelista C.C."/>
            <person name="Ferraz C."/>
            <person name="Ferriera S."/>
            <person name="Fleischmann W."/>
            <person name="Fosler C."/>
            <person name="Gabrielian A.E."/>
            <person name="Garg N.S."/>
            <person name="Gelbart W.M."/>
            <person name="Glasser K."/>
            <person name="Glodek A."/>
            <person name="Gong F."/>
            <person name="Gorrell J.H."/>
            <person name="Gu Z."/>
            <person name="Guan P."/>
            <person name="Harris M."/>
            <person name="Harris N.L."/>
            <person name="Harvey D.A."/>
            <person name="Heiman T.J."/>
            <person name="Hernandez J.R."/>
            <person name="Houck J."/>
            <person name="Hostin D."/>
            <person name="Houston K.A."/>
            <person name="Howland T.J."/>
            <person name="Wei M.-H."/>
            <person name="Ibegwam C."/>
            <person name="Jalali M."/>
            <person name="Kalush F."/>
            <person name="Karpen G.H."/>
            <person name="Ke Z."/>
            <person name="Kennison J.A."/>
            <person name="Ketchum K.A."/>
            <person name="Kimmel B.E."/>
            <person name="Kodira C.D."/>
            <person name="Kraft C.L."/>
            <person name="Kravitz S."/>
            <person name="Kulp D."/>
            <person name="Lai Z."/>
            <person name="Lasko P."/>
            <person name="Lei Y."/>
            <person name="Levitsky A.A."/>
            <person name="Li J.H."/>
            <person name="Li Z."/>
            <person name="Liang Y."/>
            <person name="Lin X."/>
            <person name="Liu X."/>
            <person name="Mattei B."/>
            <person name="McIntosh T.C."/>
            <person name="McLeod M.P."/>
            <person name="McPherson D."/>
            <person name="Merkulov G."/>
            <person name="Milshina N.V."/>
            <person name="Mobarry C."/>
            <person name="Morris J."/>
            <person name="Moshrefi A."/>
            <person name="Mount S.M."/>
            <person name="Moy M."/>
            <person name="Murphy B."/>
            <person name="Murphy L."/>
            <person name="Muzny D.M."/>
            <person name="Nelson D.L."/>
            <person name="Nelson D.R."/>
            <person name="Nelson K.A."/>
            <person name="Nixon K."/>
            <person name="Nusskern D.R."/>
            <person name="Pacleb J.M."/>
            <person name="Palazzolo M."/>
            <person name="Pittman G.S."/>
            <person name="Pan S."/>
            <person name="Pollard J."/>
            <person name="Puri V."/>
            <person name="Reese M.G."/>
            <person name="Reinert K."/>
            <person name="Remington K."/>
            <person name="Saunders R.D.C."/>
            <person name="Scheeler F."/>
            <person name="Shen H."/>
            <person name="Shue B.C."/>
            <person name="Siden-Kiamos I."/>
            <person name="Simpson M."/>
            <person name="Skupski M.P."/>
            <person name="Smith T.J."/>
            <person name="Spier E."/>
            <person name="Spradling A.C."/>
            <person name="Stapleton M."/>
            <person name="Strong R."/>
            <person name="Sun E."/>
            <person name="Svirskas R."/>
            <person name="Tector C."/>
            <person name="Turner R."/>
            <person name="Venter E."/>
            <person name="Wang A.H."/>
            <person name="Wang X."/>
            <person name="Wang Z.-Y."/>
            <person name="Wassarman D.A."/>
            <person name="Weinstock G.M."/>
            <person name="Weissenbach J."/>
            <person name="Williams S.M."/>
            <person name="Woodage T."/>
            <person name="Worley K.C."/>
            <person name="Wu D."/>
            <person name="Yang S."/>
            <person name="Yao Q.A."/>
            <person name="Ye J."/>
            <person name="Yeh R.-F."/>
            <person name="Zaveri J.S."/>
            <person name="Zhan M."/>
            <person name="Zhang G."/>
            <person name="Zhao Q."/>
            <person name="Zheng L."/>
            <person name="Zheng X.H."/>
            <person name="Zhong F.N."/>
            <person name="Zhong W."/>
            <person name="Zhou X."/>
            <person name="Zhu S.C."/>
            <person name="Zhu X."/>
            <person name="Smith H.O."/>
            <person name="Gibbs R.A."/>
            <person name="Myers E.W."/>
            <person name="Rubin G.M."/>
            <person name="Venter J.C."/>
        </authorList>
    </citation>
    <scope>NUCLEOTIDE SEQUENCE [LARGE SCALE GENOMIC DNA]</scope>
    <source>
        <strain>Berkeley</strain>
    </source>
</reference>
<reference key="3">
    <citation type="journal article" date="2002" name="Genome Biol.">
        <title>Annotation of the Drosophila melanogaster euchromatic genome: a systematic review.</title>
        <authorList>
            <person name="Misra S."/>
            <person name="Crosby M.A."/>
            <person name="Mungall C.J."/>
            <person name="Matthews B.B."/>
            <person name="Campbell K.S."/>
            <person name="Hradecky P."/>
            <person name="Huang Y."/>
            <person name="Kaminker J.S."/>
            <person name="Millburn G.H."/>
            <person name="Prochnik S.E."/>
            <person name="Smith C.D."/>
            <person name="Tupy J.L."/>
            <person name="Whitfield E.J."/>
            <person name="Bayraktaroglu L."/>
            <person name="Berman B.P."/>
            <person name="Bettencourt B.R."/>
            <person name="Celniker S.E."/>
            <person name="de Grey A.D.N.J."/>
            <person name="Drysdale R.A."/>
            <person name="Harris N.L."/>
            <person name="Richter J."/>
            <person name="Russo S."/>
            <person name="Schroeder A.J."/>
            <person name="Shu S.Q."/>
            <person name="Stapleton M."/>
            <person name="Yamada C."/>
            <person name="Ashburner M."/>
            <person name="Gelbart W.M."/>
            <person name="Rubin G.M."/>
            <person name="Lewis S.E."/>
        </authorList>
    </citation>
    <scope>GENOME REANNOTATION</scope>
    <source>
        <strain>Berkeley</strain>
    </source>
</reference>
<reference evidence="10" key="4">
    <citation type="journal article" date="2002" name="Genome Biol.">
        <title>A Drosophila full-length cDNA resource.</title>
        <authorList>
            <person name="Stapleton M."/>
            <person name="Carlson J.W."/>
            <person name="Brokstein P."/>
            <person name="Yu C."/>
            <person name="Champe M."/>
            <person name="George R.A."/>
            <person name="Guarin H."/>
            <person name="Kronmiller B."/>
            <person name="Pacleb J.M."/>
            <person name="Park S."/>
            <person name="Wan K.H."/>
            <person name="Rubin G.M."/>
            <person name="Celniker S.E."/>
        </authorList>
    </citation>
    <scope>NUCLEOTIDE SEQUENCE [LARGE SCALE MRNA]</scope>
    <source>
        <strain evidence="10">Berkeley</strain>
        <tissue evidence="10">Embryo</tissue>
    </source>
</reference>
<reference evidence="11" key="5">
    <citation type="submission" date="2009-10" db="EMBL/GenBank/DDBJ databases">
        <authorList>
            <person name="Carlson J."/>
            <person name="Booth B."/>
            <person name="Frise E."/>
            <person name="Park S."/>
            <person name="Wan K."/>
            <person name="Yu C."/>
            <person name="Celniker S."/>
        </authorList>
    </citation>
    <scope>NUCLEOTIDE SEQUENCE [LARGE SCALE MRNA] (ISOFORM D)</scope>
    <source>
        <strain evidence="11">Berkeley</strain>
        <tissue evidence="11">Embryo</tissue>
    </source>
</reference>
<reference key="6">
    <citation type="journal article" date="2008" name="J. Proteome Res.">
        <title>Phosphoproteome analysis of Drosophila melanogaster embryos.</title>
        <authorList>
            <person name="Zhai B."/>
            <person name="Villen J."/>
            <person name="Beausoleil S.A."/>
            <person name="Mintseris J."/>
            <person name="Gygi S.P."/>
        </authorList>
    </citation>
    <scope>PHOSPHORYLATION [LARGE SCALE ANALYSIS] AT SER-103; SER-107; SER-108; SER-113; SER-141; THR-144; SER-594; SER-701 AND SER-714</scope>
    <scope>IDENTIFICATION BY MASS SPECTROMETRY</scope>
    <source>
        <tissue>Embryo</tissue>
    </source>
</reference>
<reference key="7">
    <citation type="journal article" date="2016" name="Biol. Open">
        <title>Loss of function of the Drosophila Ninein-related centrosomal protein Bsg25D causes mitotic defects and impairs embryonic development.</title>
        <authorList>
            <person name="Kowanda M."/>
            <person name="Bergalet J."/>
            <person name="Wieczorek M."/>
            <person name="Brouhard G."/>
            <person name="Lecuyer E."/>
            <person name="Lasko P."/>
        </authorList>
    </citation>
    <scope>FUNCTION</scope>
    <scope>SUBCELLULAR LOCATION</scope>
    <scope>DEVELOPMENTAL STAGE</scope>
    <scope>DISRUPTION PHENOTYPE</scope>
</reference>
<reference key="8">
    <citation type="journal article" date="2016" name="Mol. Biol. Cell">
        <title>The Seckel syndrome and centrosomal protein Ninein localizes asymmetrically to stem cell centrosomes but is not required for normal development, behavior, or DNA damage response in Drosophila.</title>
        <authorList>
            <person name="Zheng Y."/>
            <person name="Mennella V."/>
            <person name="Marks S."/>
            <person name="Wildonger J."/>
            <person name="Elnagdi E."/>
            <person name="Agard D."/>
            <person name="Megraw T.L."/>
        </authorList>
    </citation>
    <scope>FUNCTION</scope>
    <scope>SUBCELLULAR LOCATION</scope>
    <scope>DEVELOPMENTAL STAGE</scope>
    <scope>DISRUPTION PHENOTYPE</scope>
</reference>
<reference key="9">
    <citation type="journal article" date="2016" name="Mol. Biol. Cell">
        <authorList>
            <person name="Zheng Y."/>
            <person name="Mennella V."/>
            <person name="Marks S."/>
            <person name="Wildonger J."/>
            <person name="Elnagdi E."/>
            <person name="Agard D."/>
            <person name="Megraw T.L."/>
        </authorList>
    </citation>
    <scope>ERRATUM OF PUBMED:27053665</scope>
</reference>
<reference key="10">
    <citation type="journal article" date="2019" name="J. Cell Biol.">
        <title>The Drosophila Ninein homologue Bsg25D cooperates with Ensconsin in myonuclear positioning.</title>
        <authorList>
            <person name="Rosen J.N."/>
            <person name="Azevedo M."/>
            <person name="Soffar D.B."/>
            <person name="Boyko V.P."/>
            <person name="Brendel M.B."/>
            <person name="Schulman V.K."/>
            <person name="Baylies M.K."/>
        </authorList>
    </citation>
    <scope>FUNCTION</scope>
    <scope>INTERACTION WITH ENS</scope>
    <scope>SUBCELLULAR LOCATION</scope>
    <scope>DEVELOPMENTAL STAGE</scope>
    <scope>DISRUPTION PHENOTYPE</scope>
</reference>
<reference key="11">
    <citation type="journal article" date="2020" name="Nat. Cell Biol.">
        <title>A perinuclear microtubule-organizing centre controls nuclear positioning and basement membrane secretion.</title>
        <authorList>
            <person name="Zheng Y."/>
            <person name="Buchwalter R.A."/>
            <person name="Zheng C."/>
            <person name="Wight E.M."/>
            <person name="Chen J.V."/>
            <person name="Megraw T.L."/>
        </authorList>
    </citation>
    <scope>FUNCTION</scope>
    <scope>SUBCELLULAR LOCATION</scope>
    <scope>DISRUPTION PHENOTYPE</scope>
</reference>
<name>NINL_DROME</name>
<evidence type="ECO:0000256" key="1">
    <source>
        <dbReference type="SAM" id="MobiDB-lite"/>
    </source>
</evidence>
<evidence type="ECO:0000269" key="2">
    <source>
    </source>
</evidence>
<evidence type="ECO:0000269" key="3">
    <source>
    </source>
</evidence>
<evidence type="ECO:0000269" key="4">
    <source>
    </source>
</evidence>
<evidence type="ECO:0000269" key="5">
    <source>
    </source>
</evidence>
<evidence type="ECO:0000269" key="6">
    <source>
    </source>
</evidence>
<evidence type="ECO:0000303" key="7">
    <source>
    </source>
</evidence>
<evidence type="ECO:0000303" key="8">
    <source>
    </source>
</evidence>
<evidence type="ECO:0000305" key="9"/>
<evidence type="ECO:0000312" key="10">
    <source>
        <dbReference type="EMBL" id="AAM12280.1"/>
    </source>
</evidence>
<evidence type="ECO:0000312" key="11">
    <source>
        <dbReference type="EMBL" id="ACX54888.1"/>
    </source>
</evidence>
<evidence type="ECO:0000312" key="12">
    <source>
        <dbReference type="FlyBase" id="FBgn0000228"/>
    </source>
</evidence>
<accession>P11929</accession>
<accession>C9QPC2</accession>
<accession>Q8IPK7</accession>
<accession>Q9VMS6</accession>
<feature type="chain" id="PRO_0000064997" description="Ninein homolog">
    <location>
        <begin position="1"/>
        <end position="1091"/>
    </location>
</feature>
<feature type="region of interest" description="Sufficient for binding to microtubules" evidence="4">
    <location>
        <begin position="1"/>
        <end position="361"/>
    </location>
</feature>
<feature type="region of interest" description="Disordered" evidence="1">
    <location>
        <begin position="100"/>
        <end position="216"/>
    </location>
</feature>
<feature type="region of interest" description="Disordered" evidence="1">
    <location>
        <begin position="456"/>
        <end position="483"/>
    </location>
</feature>
<feature type="region of interest" description="Sufficient for interaction with ens" evidence="5">
    <location>
        <begin position="487"/>
        <end position="526"/>
    </location>
</feature>
<feature type="region of interest" description="Disordered" evidence="1">
    <location>
        <begin position="525"/>
        <end position="602"/>
    </location>
</feature>
<feature type="region of interest" description="Disordered" evidence="1">
    <location>
        <begin position="616"/>
        <end position="639"/>
    </location>
</feature>
<feature type="region of interest" description="Disordered" evidence="1">
    <location>
        <begin position="799"/>
        <end position="919"/>
    </location>
</feature>
<feature type="compositionally biased region" description="Polar residues" evidence="1">
    <location>
        <begin position="168"/>
        <end position="177"/>
    </location>
</feature>
<feature type="compositionally biased region" description="Basic and acidic residues" evidence="1">
    <location>
        <begin position="527"/>
        <end position="537"/>
    </location>
</feature>
<feature type="compositionally biased region" description="Basic and acidic residues" evidence="1">
    <location>
        <begin position="547"/>
        <end position="563"/>
    </location>
</feature>
<feature type="compositionally biased region" description="Basic and acidic residues" evidence="1">
    <location>
        <begin position="616"/>
        <end position="634"/>
    </location>
</feature>
<feature type="compositionally biased region" description="Polar residues" evidence="1">
    <location>
        <begin position="822"/>
        <end position="845"/>
    </location>
</feature>
<feature type="compositionally biased region" description="Low complexity" evidence="1">
    <location>
        <begin position="846"/>
        <end position="860"/>
    </location>
</feature>
<feature type="compositionally biased region" description="Polar residues" evidence="1">
    <location>
        <begin position="894"/>
        <end position="913"/>
    </location>
</feature>
<feature type="modified residue" description="Phosphoserine" evidence="2">
    <location>
        <position position="103"/>
    </location>
</feature>
<feature type="modified residue" description="Phosphoserine" evidence="2">
    <location>
        <position position="107"/>
    </location>
</feature>
<feature type="modified residue" description="Phosphoserine" evidence="2">
    <location>
        <position position="108"/>
    </location>
</feature>
<feature type="modified residue" description="Phosphoserine" evidence="2">
    <location>
        <position position="113"/>
    </location>
</feature>
<feature type="modified residue" description="Phosphoserine" evidence="2">
    <location>
        <position position="141"/>
    </location>
</feature>
<feature type="modified residue" description="Phosphothreonine" evidence="2">
    <location>
        <position position="144"/>
    </location>
</feature>
<feature type="modified residue" description="Phosphoserine" evidence="2">
    <location>
        <position position="594"/>
    </location>
</feature>
<feature type="modified residue" description="Phosphoserine" evidence="2">
    <location>
        <position position="701"/>
    </location>
</feature>
<feature type="modified residue" description="Phosphoserine" evidence="2">
    <location>
        <position position="714"/>
    </location>
</feature>
<feature type="splice variant" id="VSP_062260" description="In isoform D." evidence="9">
    <original>MEVSADPYEQKLYQMFRSCETQCGLLDEKSLLKLCSLLELRDQGSALIASLGGSHQLGVSFGQFKEALLNFLGSEFDGNTSSGFI</original>
    <variation>MGTRLYYRRSGGQLTDPIIEKLAARF</variation>
    <location>
        <begin position="1"/>
        <end position="85"/>
    </location>
</feature>
<feature type="splice variant" id="VSP_062261" description="In isoform D." evidence="9">
    <location>
        <begin position="829"/>
        <end position="1091"/>
    </location>
</feature>
<feature type="sequence conflict" description="In Ref. 1; CAA28582 and 2; AAN10537." evidence="9" ref="1 2">
    <location>
        <begin position="78"/>
        <end position="85"/>
    </location>
</feature>
<feature type="sequence conflict" description="In Ref. 1; CAA28582." evidence="9" ref="1">
    <original>T</original>
    <variation>R</variation>
    <location>
        <position position="458"/>
    </location>
</feature>
<proteinExistence type="evidence at protein level"/>
<sequence length="1091" mass="122903">MEVSADPYEQKLYQMFRSCETQCGLLDEKSLLKLCSLLELRDQGSALIASLGGSHQLGVSFGQFKEALLNFLGSEFDGNTSSGFIERSLVITDEPLNNTYIESPPESSDREVSPKLVVGTKKYGRRSRPQQGIYELSVTDSDNTDEDQLQQQQNQRSLNGCDELGVQVQRSSSQSDLPGSRRLRSVHTSGSKLKRCASLPARRKMNSNTTGATTSPTAAAKLKQLSIQSQAQHSSSVESLDTVTPQQLETISVHSIMEAWELASIPNTRNLLHVLGFDEEEEVNLQQLTKALEEELRGIDGDHEQSNMLRALAALQATELGNYRLAYRQQHEENLKLRADNKAANQRVALLAVEVDERHASLEDNSKKQVQQLEQRHASMVREITLRMTNDRDHWTSMTGKLEAQLKSLEQEEIRLRTELELVRTENTELESEQQKAHIQITELLEQNIKLNQELAQTSSSIGGTPEHSPLRPRRHSEDKEEEMLQLMEKLAALQMENAQLRDKTDELTIEIESLNVELIRSKTKAKKQEKQEKQEDQESAATATKRRGDSPSKTHLTEESPRLGKQRKCTEGEQSDASNSGDWLALNSELQRSQSQDEELTSLRQRVAELEEELKAAKEGRSLTPESRSKELETSLEQMQRAYEDCEDYWQTKLSEERQLFEKERQIYEDEQHESDKKFTELMEKVREYEEQFSKDGRLSPIDERDMLEQQYSELEAEAAQLRSSSIQMLEEKAQEISSLQSEIEDLRQRLGESVEILTGACELTSESVAQLSAEAGKSPASSPISYLWLQSTIQEPAKSLADSKDEATASAIELLGGSPSHKTASRNNLTTSETSIFSTTPFESSQSGPSPTNSGNSNAYGANPGPAPISKPKRSQSPQQAAASEGEIADCETSSTASGKSFESNSKTSCLSHEKCSSPSALKEELKRLKFFELSLKEQIKDLSLQRDGLVMELQQLQEARPVLEKAYARTTHPTLQQRLNQLELRNRHLQNVIKQQQHYTESLMQQSWRQHQVELNDLHSRIETQGVLLADQTQRLQSADILVKDLYVENSHLTATVQRLEQQRARVNLIHQQQQQQRLVGGGLPGMP</sequence>
<dbReference type="EMBL" id="X04896">
    <property type="protein sequence ID" value="CAA28582.1"/>
    <property type="status" value="ALT_SEQ"/>
    <property type="molecule type" value="Genomic_DNA"/>
</dbReference>
<dbReference type="EMBL" id="AE014134">
    <property type="protein sequence ID" value="AAF52235.1"/>
    <property type="molecule type" value="Genomic_DNA"/>
</dbReference>
<dbReference type="EMBL" id="AE014134">
    <property type="protein sequence ID" value="ADV36948.1"/>
    <property type="molecule type" value="Genomic_DNA"/>
</dbReference>
<dbReference type="EMBL" id="AE014134">
    <property type="protein sequence ID" value="AAN10537.3"/>
    <property type="status" value="ALT_SEQ"/>
    <property type="molecule type" value="Genomic_DNA"/>
</dbReference>
<dbReference type="EMBL" id="AY095187">
    <property type="protein sequence ID" value="AAM12280.1"/>
    <property type="molecule type" value="mRNA"/>
</dbReference>
<dbReference type="EMBL" id="BT100004">
    <property type="protein sequence ID" value="ACX54888.1"/>
    <property type="molecule type" value="mRNA"/>
</dbReference>
<dbReference type="PIR" id="A26572">
    <property type="entry name" value="A26572"/>
</dbReference>
<dbReference type="RefSeq" id="NP_001188698.1">
    <molecule id="P11929-2"/>
    <property type="nucleotide sequence ID" value="NM_001201769.2"/>
</dbReference>
<dbReference type="RefSeq" id="NP_476916.4">
    <property type="nucleotide sequence ID" value="NM_057568.6"/>
</dbReference>
<dbReference type="RefSeq" id="NP_723072.1">
    <molecule id="P11929-1"/>
    <property type="nucleotide sequence ID" value="NM_164637.3"/>
</dbReference>
<dbReference type="SMR" id="P11929"/>
<dbReference type="BioGRID" id="59928">
    <property type="interactions" value="27"/>
</dbReference>
<dbReference type="FunCoup" id="P11929">
    <property type="interactions" value="135"/>
</dbReference>
<dbReference type="IntAct" id="P11929">
    <property type="interactions" value="10"/>
</dbReference>
<dbReference type="STRING" id="7227.FBpp0302745"/>
<dbReference type="GlyGen" id="P11929">
    <property type="glycosylation" value="1 site"/>
</dbReference>
<dbReference type="iPTMnet" id="P11929"/>
<dbReference type="PaxDb" id="7227-FBpp0302745"/>
<dbReference type="DNASU" id="33757"/>
<dbReference type="EnsemblMetazoa" id="FBtr0079084">
    <molecule id="P11929-1"/>
    <property type="protein sequence ID" value="FBpp0078718"/>
    <property type="gene ID" value="FBgn0000228"/>
</dbReference>
<dbReference type="EnsemblMetazoa" id="FBtr0302567">
    <molecule id="P11929-2"/>
    <property type="protein sequence ID" value="FBpp0291723"/>
    <property type="gene ID" value="FBgn0000228"/>
</dbReference>
<dbReference type="EnsemblMetazoa" id="FBtr0342939">
    <property type="protein sequence ID" value="FBpp0309716"/>
    <property type="gene ID" value="FBgn0000228"/>
</dbReference>
<dbReference type="GeneID" id="33757"/>
<dbReference type="KEGG" id="dme:Dmel_CG14025"/>
<dbReference type="AGR" id="FB:FBgn0000228"/>
<dbReference type="CTD" id="51199"/>
<dbReference type="FlyBase" id="FBgn0000228">
    <property type="gene designation" value="Nin"/>
</dbReference>
<dbReference type="VEuPathDB" id="VectorBase:FBgn0000228"/>
<dbReference type="eggNOG" id="ENOG502R2VA">
    <property type="taxonomic scope" value="Eukaryota"/>
</dbReference>
<dbReference type="GeneTree" id="ENSGT00660000095541"/>
<dbReference type="InParanoid" id="P11929"/>
<dbReference type="OrthoDB" id="5799458at2759"/>
<dbReference type="SignaLink" id="P11929"/>
<dbReference type="BioGRID-ORCS" id="33757">
    <property type="hits" value="0 hits in 3 CRISPR screens"/>
</dbReference>
<dbReference type="GenomeRNAi" id="33757"/>
<dbReference type="PRO" id="PR:P11929"/>
<dbReference type="Proteomes" id="UP000000803">
    <property type="component" value="Chromosome 2L"/>
</dbReference>
<dbReference type="Bgee" id="FBgn0000228">
    <property type="expression patterns" value="Expressed in cleaving embryo and 248 other cell types or tissues"/>
</dbReference>
<dbReference type="ExpressionAtlas" id="P11929">
    <property type="expression patterns" value="baseline and differential"/>
</dbReference>
<dbReference type="GO" id="GO:0005813">
    <property type="term" value="C:centrosome"/>
    <property type="evidence" value="ECO:0000314"/>
    <property type="project" value="FlyBase"/>
</dbReference>
<dbReference type="GO" id="GO:0000242">
    <property type="term" value="C:pericentriolar material"/>
    <property type="evidence" value="ECO:0000314"/>
    <property type="project" value="FlyBase"/>
</dbReference>
<dbReference type="GO" id="GO:0048471">
    <property type="term" value="C:perinuclear region of cytoplasm"/>
    <property type="evidence" value="ECO:0007669"/>
    <property type="project" value="UniProtKB-SubCell"/>
</dbReference>
<dbReference type="GO" id="GO:0008017">
    <property type="term" value="F:microtubule binding"/>
    <property type="evidence" value="ECO:0000314"/>
    <property type="project" value="FlyBase"/>
</dbReference>
<dbReference type="GO" id="GO:0034994">
    <property type="term" value="P:microtubule organizing center attachment site organization"/>
    <property type="evidence" value="ECO:0000314"/>
    <property type="project" value="FlyBase"/>
</dbReference>
<dbReference type="PANTHER" id="PTHR18905">
    <property type="entry name" value="NINEIN"/>
    <property type="match status" value="1"/>
</dbReference>
<dbReference type="PANTHER" id="PTHR18905:SF13">
    <property type="entry name" value="NON-CENTROSOMAL MICROTUBULE ARRAY"/>
    <property type="match status" value="1"/>
</dbReference>
<comment type="function">
    <text evidence="3 4 5 6">Required for the positioning and anchorage of the microtubule minus-ends in various cells (PubMed:27422905, PubMed:30626718, PubMed:32066907). In fat body cells, part of perinuclear non-centrosomal microtubule-organizing centers (ncMTOCs) which function to accommodate the organization of microtubule (MT) networks to control nuclear positioning and dynein motor-based retrograde endosomal trafficking (PubMed:32066907). Within the ncMTOCs, Msp300 and shot anchors the ncMTOC at the nuclear surface and recruits the MT minus-end regulators Patronin and Nin for assembly, anchoring and/or stabilization of circumferential and radial MTs at the ncMTOC (PubMed:32066907). This protein may also function with Patronin to recruit msps to the ncMTOC for the gamma-tubulin-independent elongation of radial MTs (PubMed:32066907). In embryonic myotubes and larval myofibers, functions with ens to regulate myonuclear positioning and, as a consequence, is involved in muscle development (PubMed:30626718). Likely functions by positively regulating ens (PubMed:30626718). Essential for embryogenesis, likely by contributing to accurate chromosome segregation during early embryonic nuclear divisions (PubMed:27422905). However, other reports found that it is not essential for embryogenesis or embryonic cellular divisions (PubMed:27053665, PubMed:30626718).</text>
</comment>
<comment type="subunit">
    <text evidence="5">Interacts with ens.</text>
</comment>
<comment type="subcellular location">
    <subcellularLocation>
        <location evidence="3 4">Cytoplasm</location>
        <location evidence="3 4">Cytoskeleton</location>
        <location evidence="3 4">Microtubule organizing center</location>
        <location evidence="3 4">Centrosome</location>
    </subcellularLocation>
    <subcellularLocation>
        <location evidence="3 6">Cytoplasm</location>
        <location evidence="3 6">Cytoskeleton</location>
        <location evidence="3 6">Microtubule organizing center</location>
    </subcellularLocation>
    <subcellularLocation>
        <location evidence="6">Cytoplasm</location>
        <location evidence="6">Perinuclear region</location>
    </subcellularLocation>
    <subcellularLocation>
        <location evidence="5">Cytoplasm</location>
    </subcellularLocation>
    <text evidence="3 4 5 6">During embryogenesis, localizes to the periphery of the centrosome where it partially overlaps with the pericentriolar region (PubMed:27053665, PubMed:27422905). Also localizes to pericentriolar region in larval brain neuroblasts (NBs) (PubMed:27053665). In dividing larval brain NBs and male germ stem cells (GSCs) asymmetrically localizes to centrosome pairs by preferentially accumulating at the younger, daughter centrosomes rather than the older, mother centrosomes (PubMed:27053665). In NBs daughter centrosomes it is only detected at interphase or during early mitosis (PubMed:27053665). However, it is symmetrically localized to centrosome pairs in embryos and ganglion mother cells in the developing brain (PubMed:27053665). In wing epithelial cells, localizes to non-centrosomal microtubule-organizing centers (ncMTOCs) at adherens junctions near the apical membrane (PubMed:27053665). In the fat body and myocytes of third-instar larvae, localizes to perinuclear ncMTOCs (PubMed:32066907). Enriched at the plus-ends of growing microtubules (MTs) (PubMed:27053665). Binds MTs, and with Dynein can move along MTs toward their minus-ends (PubMed:27422905). From stage 14 to stage 16 embryos, during which myonuclei split into two clusters and migrate toward muscle poles, broadly but weakly expressed in the cytoplasm and strongly enriched in cytoplasmic puncta of myotubes (PubMed:30626718).</text>
</comment>
<comment type="alternative products">
    <event type="alternative splicing"/>
    <isoform>
        <id>P11929-1</id>
        <name evidence="12">B</name>
        <sequence type="displayed"/>
    </isoform>
    <isoform>
        <id>P11929-2</id>
        <name evidence="12">D</name>
        <sequence type="described" ref="VSP_062260 VSP_062261"/>
    </isoform>
</comment>
<comment type="developmental stage">
    <text evidence="3 4 5">Detected in the oocyte of stage 2-7 egg chambers (at protein level) (PubMed:27053665, PubMed:27422905). Localizes to both the anterior and posterior poles of the oocyte from stage 10 onwards (at protein level) (PubMed:27422905). During embryogenesis, enriched at the posterior of stage 2 embryos, and then accumulates in the developing pole buds and pole cells as they form (at protein level) (PubMed:27422905, PubMed:30626718).</text>
</comment>
<comment type="disruption phenotype">
    <text evidence="3 4 5 6">Viable and fertile (PubMed:27053665, PubMed:27422905, PubMed:30626718). However, one report found that hatching rate is severely decreased in mutants, likely resulting from most embryos exhibiting varying severities of mitotic defects, such as excessive nuclear fallout, abnormal nuclear aggregates, bridges between chromosomes, chromosome segregation defects, delocalization of the centrosome from the mitotic spindle, and in some cases failure of cellularization, monopolar and tripolar spindles (PubMed:27422905). Moderate reduction in survival to adulthood and a small decrease in larval motility (PubMed:30626718). However, according to another report there is only a slight (non significant) reduction in embryo hatching rate, and cleavage furrows, and other aspects of cleavage such as spindle morphology and nuclear positioning, appears normal (PubMed:27053665). It also found no effect on mitosis or development of larval brain neuroblasts, and adults display normal locomotion behavior (PubMed:27053665). There is also no effect on their response to DNA damage following exposure to hydroxyurea or methyl methanesulfonate (PubMed:27053665). Another report also found no effect on myonuclear positioning in embryonic myotubes (PubMed:30626718). However, simultaneous knockout of Nin and the microtubule (MT) regulator ens, significantly enhances the abnormal myonuclear positioning phenotype observed in ens mutants, in which movement of nuclei towards the muscle poles is severely impaired (PubMed:30626718). RNAi-mediated knockdown has no effect on nuclear positioning or msps recruitment to the nuclear membrane in fat body cells (PubMed:32066907). However, simultaneous knockdown of Nin and Patronin, decreases msps recruitment to the nuclear membrane, and impairs both radial and circumferential MT assembly resulting in defective nuclear positioning (PubMed:32066907).</text>
</comment>
<comment type="sequence caution" evidence="9">
    <conflict type="erroneous gene model prediction">
        <sequence resource="EMBL-CDS" id="AAN10537"/>
    </conflict>
</comment>
<comment type="sequence caution" evidence="9">
    <conflict type="erroneous gene model prediction">
        <sequence resource="EMBL-CDS" id="CAA28582"/>
    </conflict>
</comment>
<comment type="sequence caution" evidence="9">
    <conflict type="frameshift">
        <sequence resource="EMBL-CDS" id="CAA28582"/>
    </conflict>
</comment>